<protein>
    <recommendedName>
        <fullName evidence="1">Acetate kinase</fullName>
        <ecNumber evidence="1">2.7.2.1</ecNumber>
    </recommendedName>
    <alternativeName>
        <fullName evidence="1">Acetokinase</fullName>
    </alternativeName>
</protein>
<comment type="function">
    <text evidence="1">Catalyzes the formation of acetyl phosphate from acetate and ATP. Can also catalyze the reverse reaction.</text>
</comment>
<comment type="catalytic activity">
    <reaction evidence="1">
        <text>acetate + ATP = acetyl phosphate + ADP</text>
        <dbReference type="Rhea" id="RHEA:11352"/>
        <dbReference type="ChEBI" id="CHEBI:22191"/>
        <dbReference type="ChEBI" id="CHEBI:30089"/>
        <dbReference type="ChEBI" id="CHEBI:30616"/>
        <dbReference type="ChEBI" id="CHEBI:456216"/>
        <dbReference type="EC" id="2.7.2.1"/>
    </reaction>
</comment>
<comment type="cofactor">
    <cofactor evidence="1">
        <name>Mg(2+)</name>
        <dbReference type="ChEBI" id="CHEBI:18420"/>
    </cofactor>
    <cofactor evidence="1">
        <name>Mn(2+)</name>
        <dbReference type="ChEBI" id="CHEBI:29035"/>
    </cofactor>
    <text evidence="1">Mg(2+). Can also accept Mn(2+).</text>
</comment>
<comment type="pathway">
    <text evidence="1">Metabolic intermediate biosynthesis; acetyl-CoA biosynthesis; acetyl-CoA from acetate: step 1/2.</text>
</comment>
<comment type="subunit">
    <text evidence="1">Homodimer.</text>
</comment>
<comment type="subcellular location">
    <subcellularLocation>
        <location evidence="1">Cytoplasm</location>
    </subcellularLocation>
</comment>
<comment type="similarity">
    <text evidence="1">Belongs to the acetokinase family.</text>
</comment>
<organism>
    <name type="scientific">Geobacter metallireducens (strain ATCC 53774 / DSM 7210 / GS-15)</name>
    <dbReference type="NCBI Taxonomy" id="269799"/>
    <lineage>
        <taxon>Bacteria</taxon>
        <taxon>Pseudomonadati</taxon>
        <taxon>Thermodesulfobacteriota</taxon>
        <taxon>Desulfuromonadia</taxon>
        <taxon>Geobacterales</taxon>
        <taxon>Geobacteraceae</taxon>
        <taxon>Geobacter</taxon>
    </lineage>
</organism>
<name>ACKA_GEOMG</name>
<feature type="chain" id="PRO_1000002233" description="Acetate kinase">
    <location>
        <begin position="1"/>
        <end position="421"/>
    </location>
</feature>
<feature type="active site" description="Proton donor/acceptor" evidence="1">
    <location>
        <position position="148"/>
    </location>
</feature>
<feature type="binding site" evidence="1">
    <location>
        <position position="7"/>
    </location>
    <ligand>
        <name>Mg(2+)</name>
        <dbReference type="ChEBI" id="CHEBI:18420"/>
    </ligand>
</feature>
<feature type="binding site" evidence="1">
    <location>
        <position position="14"/>
    </location>
    <ligand>
        <name>ATP</name>
        <dbReference type="ChEBI" id="CHEBI:30616"/>
    </ligand>
</feature>
<feature type="binding site" evidence="1">
    <location>
        <position position="91"/>
    </location>
    <ligand>
        <name>substrate</name>
    </ligand>
</feature>
<feature type="binding site" evidence="1">
    <location>
        <begin position="208"/>
        <end position="212"/>
    </location>
    <ligand>
        <name>ATP</name>
        <dbReference type="ChEBI" id="CHEBI:30616"/>
    </ligand>
</feature>
<feature type="binding site" evidence="1">
    <location>
        <begin position="283"/>
        <end position="285"/>
    </location>
    <ligand>
        <name>ATP</name>
        <dbReference type="ChEBI" id="CHEBI:30616"/>
    </ligand>
</feature>
<feature type="binding site" evidence="1">
    <location>
        <position position="387"/>
    </location>
    <ligand>
        <name>Mg(2+)</name>
        <dbReference type="ChEBI" id="CHEBI:18420"/>
    </ligand>
</feature>
<feature type="site" description="Transition state stabilizer" evidence="1">
    <location>
        <position position="180"/>
    </location>
</feature>
<feature type="site" description="Transition state stabilizer" evidence="1">
    <location>
        <position position="241"/>
    </location>
</feature>
<evidence type="ECO:0000255" key="1">
    <source>
        <dbReference type="HAMAP-Rule" id="MF_00020"/>
    </source>
</evidence>
<keyword id="KW-0067">ATP-binding</keyword>
<keyword id="KW-0963">Cytoplasm</keyword>
<keyword id="KW-0418">Kinase</keyword>
<keyword id="KW-0460">Magnesium</keyword>
<keyword id="KW-0479">Metal-binding</keyword>
<keyword id="KW-0547">Nucleotide-binding</keyword>
<keyword id="KW-1185">Reference proteome</keyword>
<keyword id="KW-0808">Transferase</keyword>
<dbReference type="EC" id="2.7.2.1" evidence="1"/>
<dbReference type="EMBL" id="CP000148">
    <property type="protein sequence ID" value="ABB31274.1"/>
    <property type="molecule type" value="Genomic_DNA"/>
</dbReference>
<dbReference type="RefSeq" id="WP_004513207.1">
    <property type="nucleotide sequence ID" value="NC_007517.1"/>
</dbReference>
<dbReference type="SMR" id="Q39WV0"/>
<dbReference type="STRING" id="269799.Gmet_1034"/>
<dbReference type="KEGG" id="gme:Gmet_1034"/>
<dbReference type="eggNOG" id="COG0282">
    <property type="taxonomic scope" value="Bacteria"/>
</dbReference>
<dbReference type="HOGENOM" id="CLU_020352_0_1_7"/>
<dbReference type="UniPathway" id="UPA00340">
    <property type="reaction ID" value="UER00458"/>
</dbReference>
<dbReference type="Proteomes" id="UP000007073">
    <property type="component" value="Chromosome"/>
</dbReference>
<dbReference type="GO" id="GO:0005737">
    <property type="term" value="C:cytoplasm"/>
    <property type="evidence" value="ECO:0007669"/>
    <property type="project" value="UniProtKB-SubCell"/>
</dbReference>
<dbReference type="GO" id="GO:0008776">
    <property type="term" value="F:acetate kinase activity"/>
    <property type="evidence" value="ECO:0007669"/>
    <property type="project" value="UniProtKB-UniRule"/>
</dbReference>
<dbReference type="GO" id="GO:0005524">
    <property type="term" value="F:ATP binding"/>
    <property type="evidence" value="ECO:0007669"/>
    <property type="project" value="UniProtKB-KW"/>
</dbReference>
<dbReference type="GO" id="GO:0000287">
    <property type="term" value="F:magnesium ion binding"/>
    <property type="evidence" value="ECO:0007669"/>
    <property type="project" value="UniProtKB-UniRule"/>
</dbReference>
<dbReference type="GO" id="GO:0006083">
    <property type="term" value="P:acetate metabolic process"/>
    <property type="evidence" value="ECO:0007669"/>
    <property type="project" value="TreeGrafter"/>
</dbReference>
<dbReference type="GO" id="GO:0006085">
    <property type="term" value="P:acetyl-CoA biosynthetic process"/>
    <property type="evidence" value="ECO:0007669"/>
    <property type="project" value="UniProtKB-UniRule"/>
</dbReference>
<dbReference type="CDD" id="cd24010">
    <property type="entry name" value="ASKHA_NBD_AcK_PK"/>
    <property type="match status" value="1"/>
</dbReference>
<dbReference type="Gene3D" id="3.30.420.40">
    <property type="match status" value="2"/>
</dbReference>
<dbReference type="HAMAP" id="MF_00020">
    <property type="entry name" value="Acetate_kinase"/>
    <property type="match status" value="1"/>
</dbReference>
<dbReference type="InterPro" id="IPR004372">
    <property type="entry name" value="Ac/propionate_kinase"/>
</dbReference>
<dbReference type="InterPro" id="IPR000890">
    <property type="entry name" value="Aliphatic_acid_kin_short-chain"/>
</dbReference>
<dbReference type="InterPro" id="IPR023865">
    <property type="entry name" value="Aliphatic_acid_kinase_CS"/>
</dbReference>
<dbReference type="InterPro" id="IPR043129">
    <property type="entry name" value="ATPase_NBD"/>
</dbReference>
<dbReference type="NCBIfam" id="TIGR00016">
    <property type="entry name" value="ackA"/>
    <property type="match status" value="1"/>
</dbReference>
<dbReference type="PANTHER" id="PTHR21060">
    <property type="entry name" value="ACETATE KINASE"/>
    <property type="match status" value="1"/>
</dbReference>
<dbReference type="PANTHER" id="PTHR21060:SF15">
    <property type="entry name" value="ACETATE KINASE-RELATED"/>
    <property type="match status" value="1"/>
</dbReference>
<dbReference type="Pfam" id="PF00871">
    <property type="entry name" value="Acetate_kinase"/>
    <property type="match status" value="1"/>
</dbReference>
<dbReference type="PIRSF" id="PIRSF000722">
    <property type="entry name" value="Acetate_prop_kin"/>
    <property type="match status" value="1"/>
</dbReference>
<dbReference type="PRINTS" id="PR00471">
    <property type="entry name" value="ACETATEKNASE"/>
</dbReference>
<dbReference type="SUPFAM" id="SSF53067">
    <property type="entry name" value="Actin-like ATPase domain"/>
    <property type="match status" value="2"/>
</dbReference>
<dbReference type="PROSITE" id="PS01075">
    <property type="entry name" value="ACETATE_KINASE_1"/>
    <property type="match status" value="1"/>
</dbReference>
<reference key="1">
    <citation type="journal article" date="2009" name="BMC Microbiol.">
        <title>The genome sequence of Geobacter metallireducens: features of metabolism, physiology and regulation common and dissimilar to Geobacter sulfurreducens.</title>
        <authorList>
            <person name="Aklujkar M."/>
            <person name="Krushkal J."/>
            <person name="DiBartolo G."/>
            <person name="Lapidus A."/>
            <person name="Land M.L."/>
            <person name="Lovley D.R."/>
        </authorList>
    </citation>
    <scope>NUCLEOTIDE SEQUENCE [LARGE SCALE GENOMIC DNA]</scope>
    <source>
        <strain>ATCC 53774 / DSM 7210 / GS-15</strain>
    </source>
</reference>
<accession>Q39WV0</accession>
<sequence length="421" mass="46890">MVILALNCGSSSVKYQLFDWEKKEVVAKGMVERVIIGDSFIMHEVPGRETYRKEYECPDHKVAIDLIIRTLVDGEHGVLKDINEISAVGHRVVHGGEMFTRSVLIDEKVLDAVKDVQHLAPLHNPPNIAGIEAAQAVLPSVPHVAIFDTAFHQTMPEHAYLYPLPYEWYEKYGVRRYGFHGTSHLFVSKRAAVLLGKKPSDCNIITMHIGNGVSHCAIRGGVSIDTSMGLTPLEGAVMGTRCGDIDPAIPAFMMQKENLSAKEIDSILNKKSGVLGVTGRFTDRRDVIENANNGDHRCKVALEIEAYRLKKYIGTYMAVLGRLDAVVFTAGVGEMGWPIREKTIEGLEGIGIKLDRERNKSAMTRKRETLITTDDSPIKVFVIPTDEELVFTEDVVAILDGTYTDHMNFDYSFARQDFVRS</sequence>
<gene>
    <name evidence="1" type="primary">ackA</name>
    <name type="ordered locus">Gmet_1034</name>
</gene>
<proteinExistence type="inferred from homology"/>